<protein>
    <recommendedName>
        <fullName>Methenyltetrahydromethanopterin cyclohydrolase</fullName>
        <ecNumber>3.5.4.27</ecNumber>
    </recommendedName>
    <alternativeName>
        <fullName>Methenyl-H4MPT cyclohydrolase</fullName>
    </alternativeName>
</protein>
<sequence>MLSVNKKALEIVNKMIENKEEINIDVIKLENGATVLDCGVNVPGSWKAGKLFTKICLGGLAHVGISLSPCECKGITLPYVKIKTSHPAIATLGAQKAGWAVKVGKYFAMGSGPARALAKKPKKTYEEIGYEDDADVAVLCLEASKLPNEEVAEYVAKECGVEVENVYLLVAPTASLVGSIQISGRVVENGTYKMLEVLEFDVNKVKYAAGLAPIAPIIGDDFAMMGATNDMVLYGGITYYYIKSDENDDIESLCKALPSCASKDYGKPFMEVFKAADYDFYKIDKGMFAPAVVVINDMTTGKVYRAGKVNAEVLKKSLGWTEL</sequence>
<keyword id="KW-0963">Cytoplasm</keyword>
<keyword id="KW-0378">Hydrolase</keyword>
<keyword id="KW-0484">Methanogenesis</keyword>
<keyword id="KW-0554">One-carbon metabolism</keyword>
<keyword id="KW-1185">Reference proteome</keyword>
<feature type="chain" id="PRO_0000140881" description="Methenyltetrahydromethanopterin cyclohydrolase">
    <location>
        <begin position="1"/>
        <end position="323"/>
    </location>
</feature>
<evidence type="ECO:0000250" key="1"/>
<evidence type="ECO:0000305" key="2"/>
<name>MCH_METJA</name>
<comment type="function">
    <text evidence="1">Catalyzes the reversible interconversion of 5-formyl-H(4)MPT to methenyl-H(4)MPT(+).</text>
</comment>
<comment type="catalytic activity">
    <reaction>
        <text>5,10-methenyl-5,6,7,8-tetrahydromethanopterin + H2O = N(5)-formyl-5,6,7,8-tetrahydromethanopterin + H(+)</text>
        <dbReference type="Rhea" id="RHEA:19053"/>
        <dbReference type="ChEBI" id="CHEBI:15377"/>
        <dbReference type="ChEBI" id="CHEBI:15378"/>
        <dbReference type="ChEBI" id="CHEBI:58018"/>
        <dbReference type="ChEBI" id="CHEBI:58337"/>
        <dbReference type="EC" id="3.5.4.27"/>
    </reaction>
</comment>
<comment type="pathway">
    <text>One-carbon metabolism; methanogenesis from CO(2); 5,10-methenyl-5,6,7,8-tetrahydromethanopterin from CO(2): step 3/3.</text>
</comment>
<comment type="subcellular location">
    <subcellularLocation>
        <location evidence="1">Cytoplasm</location>
    </subcellularLocation>
</comment>
<comment type="similarity">
    <text evidence="2">Belongs to the MCH family.</text>
</comment>
<proteinExistence type="inferred from homology"/>
<organism>
    <name type="scientific">Methanocaldococcus jannaschii (strain ATCC 43067 / DSM 2661 / JAL-1 / JCM 10045 / NBRC 100440)</name>
    <name type="common">Methanococcus jannaschii</name>
    <dbReference type="NCBI Taxonomy" id="243232"/>
    <lineage>
        <taxon>Archaea</taxon>
        <taxon>Methanobacteriati</taxon>
        <taxon>Methanobacteriota</taxon>
        <taxon>Methanomada group</taxon>
        <taxon>Methanococci</taxon>
        <taxon>Methanococcales</taxon>
        <taxon>Methanocaldococcaceae</taxon>
        <taxon>Methanocaldococcus</taxon>
    </lineage>
</organism>
<reference key="1">
    <citation type="journal article" date="1996" name="Science">
        <title>Complete genome sequence of the methanogenic archaeon, Methanococcus jannaschii.</title>
        <authorList>
            <person name="Bult C.J."/>
            <person name="White O."/>
            <person name="Olsen G.J."/>
            <person name="Zhou L."/>
            <person name="Fleischmann R.D."/>
            <person name="Sutton G.G."/>
            <person name="Blake J.A."/>
            <person name="FitzGerald L.M."/>
            <person name="Clayton R.A."/>
            <person name="Gocayne J.D."/>
            <person name="Kerlavage A.R."/>
            <person name="Dougherty B.A."/>
            <person name="Tomb J.-F."/>
            <person name="Adams M.D."/>
            <person name="Reich C.I."/>
            <person name="Overbeek R."/>
            <person name="Kirkness E.F."/>
            <person name="Weinstock K.G."/>
            <person name="Merrick J.M."/>
            <person name="Glodek A."/>
            <person name="Scott J.L."/>
            <person name="Geoghagen N.S.M."/>
            <person name="Weidman J.F."/>
            <person name="Fuhrmann J.L."/>
            <person name="Nguyen D."/>
            <person name="Utterback T.R."/>
            <person name="Kelley J.M."/>
            <person name="Peterson J.D."/>
            <person name="Sadow P.W."/>
            <person name="Hanna M.C."/>
            <person name="Cotton M.D."/>
            <person name="Roberts K.M."/>
            <person name="Hurst M.A."/>
            <person name="Kaine B.P."/>
            <person name="Borodovsky M."/>
            <person name="Klenk H.-P."/>
            <person name="Fraser C.M."/>
            <person name="Smith H.O."/>
            <person name="Woese C.R."/>
            <person name="Venter J.C."/>
        </authorList>
    </citation>
    <scope>NUCLEOTIDE SEQUENCE [LARGE SCALE GENOMIC DNA]</scope>
    <source>
        <strain>ATCC 43067 / DSM 2661 / JAL-1 / JCM 10045 / NBRC 100440</strain>
    </source>
</reference>
<gene>
    <name type="primary">mch</name>
    <name type="ordered locus">MJ1636</name>
</gene>
<accession>Q59030</accession>
<dbReference type="EC" id="3.5.4.27"/>
<dbReference type="EMBL" id="L77117">
    <property type="protein sequence ID" value="AAB99657.1"/>
    <property type="molecule type" value="Genomic_DNA"/>
</dbReference>
<dbReference type="PIR" id="B64504">
    <property type="entry name" value="B64504"/>
</dbReference>
<dbReference type="RefSeq" id="WP_010871160.1">
    <property type="nucleotide sequence ID" value="NC_000909.1"/>
</dbReference>
<dbReference type="SMR" id="Q59030"/>
<dbReference type="FunCoup" id="Q59030">
    <property type="interactions" value="91"/>
</dbReference>
<dbReference type="STRING" id="243232.MJ_1636"/>
<dbReference type="PaxDb" id="243232-MJ_1636"/>
<dbReference type="EnsemblBacteria" id="AAB99657">
    <property type="protein sequence ID" value="AAB99657"/>
    <property type="gene ID" value="MJ_1636"/>
</dbReference>
<dbReference type="GeneID" id="1452545"/>
<dbReference type="KEGG" id="mja:MJ_1636"/>
<dbReference type="eggNOG" id="arCOG02675">
    <property type="taxonomic scope" value="Archaea"/>
</dbReference>
<dbReference type="HOGENOM" id="CLU_876031_0_0_2"/>
<dbReference type="InParanoid" id="Q59030"/>
<dbReference type="OrthoDB" id="105468at2157"/>
<dbReference type="PhylomeDB" id="Q59030"/>
<dbReference type="UniPathway" id="UPA00640">
    <property type="reaction ID" value="UER00694"/>
</dbReference>
<dbReference type="Proteomes" id="UP000000805">
    <property type="component" value="Chromosome"/>
</dbReference>
<dbReference type="GO" id="GO:0005737">
    <property type="term" value="C:cytoplasm"/>
    <property type="evidence" value="ECO:0007669"/>
    <property type="project" value="UniProtKB-SubCell"/>
</dbReference>
<dbReference type="GO" id="GO:0018759">
    <property type="term" value="F:methenyltetrahydromethanopterin cyclohydrolase activity"/>
    <property type="evidence" value="ECO:0007669"/>
    <property type="project" value="UniProtKB-UniRule"/>
</dbReference>
<dbReference type="GO" id="GO:0019386">
    <property type="term" value="P:methanogenesis, from carbon dioxide"/>
    <property type="evidence" value="ECO:0007669"/>
    <property type="project" value="UniProtKB-UniRule"/>
</dbReference>
<dbReference type="GO" id="GO:0006730">
    <property type="term" value="P:one-carbon metabolic process"/>
    <property type="evidence" value="ECO:0007669"/>
    <property type="project" value="UniProtKB-UniRule"/>
</dbReference>
<dbReference type="CDD" id="cd00545">
    <property type="entry name" value="MCH"/>
    <property type="match status" value="1"/>
</dbReference>
<dbReference type="Gene3D" id="3.10.340.11">
    <property type="entry name" value="Methenyltetrahydromethanopterin Cyclohydrolase, Chain A, domain 1"/>
    <property type="match status" value="1"/>
</dbReference>
<dbReference type="Gene3D" id="3.30.1030.10">
    <property type="entry name" value="Methenyltetrahydromethanopterin Cyclohydrolase, Chain A, domain 2"/>
    <property type="match status" value="1"/>
</dbReference>
<dbReference type="HAMAP" id="MF_00486">
    <property type="entry name" value="McH"/>
    <property type="match status" value="1"/>
</dbReference>
<dbReference type="InterPro" id="IPR003209">
    <property type="entry name" value="METHMP_CycHdrlase"/>
</dbReference>
<dbReference type="NCBIfam" id="TIGR03120">
    <property type="entry name" value="one_C_mch"/>
    <property type="match status" value="1"/>
</dbReference>
<dbReference type="Pfam" id="PF02289">
    <property type="entry name" value="MCH"/>
    <property type="match status" value="1"/>
</dbReference>
<dbReference type="SUPFAM" id="SSF56199">
    <property type="entry name" value="Methenyltetrahydromethanopterin cyclohydrolase"/>
    <property type="match status" value="1"/>
</dbReference>